<keyword id="KW-1043">Host membrane</keyword>
<keyword id="KW-1045">Host mitochondrion</keyword>
<keyword id="KW-0945">Host-virus interaction</keyword>
<keyword id="KW-0472">Membrane</keyword>
<keyword id="KW-1119">Modulation of host cell apoptosis by virus</keyword>
<keyword id="KW-1185">Reference proteome</keyword>
<keyword id="KW-0812">Transmembrane</keyword>
<keyword id="KW-1133">Transmembrane helix</keyword>
<accession>F5HDA4</accession>
<comment type="function">
    <text evidence="2 3">Plays a role in the inhibition of host apoptosis to allow completion of the viral lytic replication and may thus favor the maintenance of persistent infection in infected host.</text>
</comment>
<comment type="subunit">
    <text evidence="2 3">Interacts with host CAMLG; this interaction allows efficient apoptosis inhibition. Additionally, interacts with vGPCR/ORF74 and induces its proteasomeal degradation.</text>
</comment>
<comment type="interaction">
    <interactant intactId="EBI-9002986">
        <id>F5HDA4</id>
    </interactant>
    <interactant intactId="EBI-7930093">
        <id>Q98146</id>
        <label>ORF74</label>
    </interactant>
    <organismsDiffer>false</organismsDiffer>
    <experiments>5</experiments>
</comment>
<comment type="subcellular location">
    <subcellularLocation>
        <location evidence="4">Host membrane</location>
        <topology evidence="4">Single-pass membrane protein</topology>
    </subcellularLocation>
    <subcellularLocation>
        <location evidence="2">Host mitochondrion</location>
    </subcellularLocation>
</comment>
<proteinExistence type="evidence at protein level"/>
<protein>
    <recommendedName>
        <fullName>Protein K7</fullName>
    </recommendedName>
</protein>
<sequence>MGTLEIKGASLSQFSTGTAQSPWLPLHLWILCSLLAFLPLLVFIGAADCGLIASLLAIYPSWLSARFSVLLFPHWPESCSTKNTARSGALHKPAEQKLRFAQKPCHGNYTVTPCGLLHWIQSPGQL</sequence>
<organismHost>
    <name type="scientific">Homo sapiens</name>
    <name type="common">Human</name>
    <dbReference type="NCBI Taxonomy" id="9606"/>
</organismHost>
<evidence type="ECO:0000255" key="1"/>
<evidence type="ECO:0000269" key="2">
    <source>
    </source>
</evidence>
<evidence type="ECO:0000269" key="3">
    <source>
    </source>
</evidence>
<evidence type="ECO:0000305" key="4"/>
<reference key="1">
    <citation type="journal article" date="1999" name="J. Virol.">
        <title>Identification of a spliced gene from Kaposi's sarcoma-associated herpesvirus encoding a protein with similarities to latent membrane proteins 1 and 2A of Epstein-Barr virus.</title>
        <authorList>
            <person name="Glenn M."/>
            <person name="Rainbow L."/>
            <person name="Aurade F."/>
            <person name="Davison A."/>
            <person name="Schulz T.F."/>
        </authorList>
    </citation>
    <scope>NUCLEOTIDE SEQUENCE [LARGE SCALE GENOMIC DNA]</scope>
</reference>
<reference key="2">
    <citation type="journal article" date="2006" name="J. Gen. Virol.">
        <title>Kaposi's sarcoma-associated herpesvirus immune modulation: an overview.</title>
        <authorList>
            <person name="Rezaee S.A.R."/>
            <person name="Cunningham C."/>
            <person name="Davison A.J."/>
            <person name="Blackbourn D.J."/>
        </authorList>
    </citation>
    <scope>NUCLEOTIDE SEQUENCE [LARGE SCALE GENOMIC DNA]</scope>
</reference>
<reference key="3">
    <citation type="journal article" date="2002" name="J. Virol.">
        <title>Kaposi's sarcoma-associated herpesvirus mitochondrial K7 protein targets a cellular calcium-modulating cyclophilin ligand to modulate intracellular calcium concentration and inhibit apoptosis.</title>
        <authorList>
            <person name="Feng P."/>
            <person name="Park J."/>
            <person name="Lee B.S."/>
            <person name="Lee S.H."/>
            <person name="Bram R.J."/>
            <person name="Jung J.U."/>
        </authorList>
    </citation>
    <scope>FUNCTION</scope>
    <scope>INTERACTION WITH HOST CAMLG</scope>
    <scope>SUBCELLULAR LOCATION</scope>
</reference>
<reference key="4">
    <citation type="journal article" date="2008" name="PLoS Pathog.">
        <title>Kaposi's sarcoma-associated herpesvirus K7 induces viral G protein-coupled receptor degradation and reduces its tumorigenicity.</title>
        <authorList>
            <person name="Feng H."/>
            <person name="Dong X."/>
            <person name="Negaard A."/>
            <person name="Feng P."/>
        </authorList>
    </citation>
    <scope>FUNCTION</scope>
    <scope>INTERACTION WITH PROTEIN ORF74</scope>
</reference>
<organism>
    <name type="scientific">Human herpesvirus 8 type P (isolate GK18)</name>
    <name type="common">HHV-8</name>
    <name type="synonym">Kaposi's sarcoma-associated herpesvirus</name>
    <dbReference type="NCBI Taxonomy" id="868565"/>
    <lineage>
        <taxon>Viruses</taxon>
        <taxon>Duplodnaviria</taxon>
        <taxon>Heunggongvirae</taxon>
        <taxon>Peploviricota</taxon>
        <taxon>Herviviricetes</taxon>
        <taxon>Herpesvirales</taxon>
        <taxon>Orthoherpesviridae</taxon>
        <taxon>Gammaherpesvirinae</taxon>
        <taxon>Rhadinovirus</taxon>
        <taxon>Rhadinovirus humangamma8</taxon>
        <taxon>Human herpesvirus 8</taxon>
    </lineage>
</organism>
<dbReference type="EMBL" id="AF148805">
    <property type="protein sequence ID" value="ABD28865.1"/>
    <property type="molecule type" value="Genomic_DNA"/>
</dbReference>
<dbReference type="RefSeq" id="YP_001129367.1">
    <property type="nucleotide sequence ID" value="NC_009333.1"/>
</dbReference>
<dbReference type="IntAct" id="F5HDA4">
    <property type="interactions" value="1"/>
</dbReference>
<dbReference type="DNASU" id="4961500"/>
<dbReference type="GeneID" id="4961500"/>
<dbReference type="KEGG" id="vg:4961500"/>
<dbReference type="Proteomes" id="UP000000942">
    <property type="component" value="Segment"/>
</dbReference>
<dbReference type="GO" id="GO:0033644">
    <property type="term" value="C:host cell membrane"/>
    <property type="evidence" value="ECO:0007669"/>
    <property type="project" value="UniProtKB-SubCell"/>
</dbReference>
<dbReference type="GO" id="GO:0033650">
    <property type="term" value="C:host cell mitochondrion"/>
    <property type="evidence" value="ECO:0007669"/>
    <property type="project" value="UniProtKB-SubCell"/>
</dbReference>
<dbReference type="GO" id="GO:0016020">
    <property type="term" value="C:membrane"/>
    <property type="evidence" value="ECO:0007669"/>
    <property type="project" value="UniProtKB-KW"/>
</dbReference>
<dbReference type="GO" id="GO:0052150">
    <property type="term" value="P:symbiont-mediated perturbation of host apoptosis"/>
    <property type="evidence" value="ECO:0007669"/>
    <property type="project" value="UniProtKB-KW"/>
</dbReference>
<name>K7_HHV8P</name>
<gene>
    <name type="primary">K7</name>
</gene>
<feature type="chain" id="PRO_0000423844" description="Protein K7">
    <location>
        <begin position="1"/>
        <end position="126"/>
    </location>
</feature>
<feature type="transmembrane region" description="Helical" evidence="1">
    <location>
        <begin position="24"/>
        <end position="44"/>
    </location>
</feature>